<keyword id="KW-0150">Chloroplast</keyword>
<keyword id="KW-0240">DNA-directed RNA polymerase</keyword>
<keyword id="KW-0548">Nucleotidyltransferase</keyword>
<keyword id="KW-0934">Plastid</keyword>
<keyword id="KW-0804">Transcription</keyword>
<keyword id="KW-0808">Transferase</keyword>
<gene>
    <name evidence="1" type="primary">rpoA</name>
</gene>
<accession>A4QJW3</accession>
<feature type="chain" id="PRO_0000296899" description="DNA-directed RNA polymerase subunit alpha">
    <location>
        <begin position="1"/>
        <end position="327"/>
    </location>
</feature>
<feature type="region of interest" description="Alpha N-terminal domain (alpha-NTD)" evidence="1">
    <location>
        <begin position="1"/>
        <end position="233"/>
    </location>
</feature>
<feature type="region of interest" description="Alpha C-terminal domain (alpha-CTD)" evidence="1">
    <location>
        <begin position="265"/>
        <end position="327"/>
    </location>
</feature>
<evidence type="ECO:0000255" key="1">
    <source>
        <dbReference type="HAMAP-Rule" id="MF_00059"/>
    </source>
</evidence>
<sequence length="327" mass="37946">MVREKVKVSTRTLQWKCVESRRDSKRLYYGRFILSPLMKGQADTIGIAMRRALLGEIEGTCITRAKSENIPHDYSNIVGIQESVHEILMNLNEIVLRSNLYGTRNALICVQGPGYITARDIILPPSVEIIDNTQHIATLTEPIDLCIELKIERNRGYSLKMSNNFEDRSYPIDAVFMPVQNANHSIHSYGNGNEKQEILFLEIWTNGSLTPKEALHEASRNLINLFIPFLHVEEETVYLENNQHQVTLPFFPFHNRLVNLRKKKKELAFQYIFIDQLELPPRIYNCLKKSNIHTLLDLLNNSQEDLIKIEHFHIEDVKKILDILEKK</sequence>
<geneLocation type="chloroplast"/>
<organism>
    <name type="scientific">Olimarabidopsis pumila</name>
    <name type="common">Dwarf rocket</name>
    <name type="synonym">Arabidopsis griffithiana</name>
    <dbReference type="NCBI Taxonomy" id="74718"/>
    <lineage>
        <taxon>Eukaryota</taxon>
        <taxon>Viridiplantae</taxon>
        <taxon>Streptophyta</taxon>
        <taxon>Embryophyta</taxon>
        <taxon>Tracheophyta</taxon>
        <taxon>Spermatophyta</taxon>
        <taxon>Magnoliopsida</taxon>
        <taxon>eudicotyledons</taxon>
        <taxon>Gunneridae</taxon>
        <taxon>Pentapetalae</taxon>
        <taxon>rosids</taxon>
        <taxon>malvids</taxon>
        <taxon>Brassicales</taxon>
        <taxon>Brassicaceae</taxon>
        <taxon>Alyssopsideae</taxon>
        <taxon>Olimarabidopsis</taxon>
    </lineage>
</organism>
<name>RPOA_OLIPU</name>
<protein>
    <recommendedName>
        <fullName evidence="1">DNA-directed RNA polymerase subunit alpha</fullName>
        <shortName evidence="1">PEP</shortName>
        <ecNumber evidence="1">2.7.7.6</ecNumber>
    </recommendedName>
    <alternativeName>
        <fullName evidence="1">Plastid-encoded RNA polymerase subunit alpha</fullName>
        <shortName evidence="1">RNA polymerase subunit alpha</shortName>
    </alternativeName>
</protein>
<comment type="function">
    <text evidence="1">DNA-dependent RNA polymerase catalyzes the transcription of DNA into RNA using the four ribonucleoside triphosphates as substrates.</text>
</comment>
<comment type="catalytic activity">
    <reaction evidence="1">
        <text>RNA(n) + a ribonucleoside 5'-triphosphate = RNA(n+1) + diphosphate</text>
        <dbReference type="Rhea" id="RHEA:21248"/>
        <dbReference type="Rhea" id="RHEA-COMP:14527"/>
        <dbReference type="Rhea" id="RHEA-COMP:17342"/>
        <dbReference type="ChEBI" id="CHEBI:33019"/>
        <dbReference type="ChEBI" id="CHEBI:61557"/>
        <dbReference type="ChEBI" id="CHEBI:140395"/>
        <dbReference type="EC" id="2.7.7.6"/>
    </reaction>
</comment>
<comment type="subunit">
    <text evidence="1">In plastids the minimal PEP RNA polymerase catalytic core is composed of four subunits: alpha, beta, beta', and beta''. When a (nuclear-encoded) sigma factor is associated with the core the holoenzyme is formed, which can initiate transcription.</text>
</comment>
<comment type="subcellular location">
    <subcellularLocation>
        <location>Plastid</location>
        <location>Chloroplast</location>
    </subcellularLocation>
</comment>
<comment type="domain">
    <text evidence="1">The N-terminal domain is essential for RNAP assembly and basal transcription, whereas the C-terminal domain is involved in interaction with transcriptional regulators and with upstream promoter elements.</text>
</comment>
<comment type="similarity">
    <text evidence="1">Belongs to the RNA polymerase alpha chain family.</text>
</comment>
<proteinExistence type="inferred from homology"/>
<dbReference type="EC" id="2.7.7.6" evidence="1"/>
<dbReference type="EMBL" id="AP009368">
    <property type="protein sequence ID" value="BAF49971.1"/>
    <property type="molecule type" value="Genomic_DNA"/>
</dbReference>
<dbReference type="RefSeq" id="YP_001123147.1">
    <property type="nucleotide sequence ID" value="NC_009267.1"/>
</dbReference>
<dbReference type="SMR" id="A4QJW3"/>
<dbReference type="GeneID" id="4962351"/>
<dbReference type="GO" id="GO:0009507">
    <property type="term" value="C:chloroplast"/>
    <property type="evidence" value="ECO:0007669"/>
    <property type="project" value="UniProtKB-SubCell"/>
</dbReference>
<dbReference type="GO" id="GO:0000428">
    <property type="term" value="C:DNA-directed RNA polymerase complex"/>
    <property type="evidence" value="ECO:0007669"/>
    <property type="project" value="UniProtKB-KW"/>
</dbReference>
<dbReference type="GO" id="GO:0005739">
    <property type="term" value="C:mitochondrion"/>
    <property type="evidence" value="ECO:0007669"/>
    <property type="project" value="GOC"/>
</dbReference>
<dbReference type="GO" id="GO:0003677">
    <property type="term" value="F:DNA binding"/>
    <property type="evidence" value="ECO:0007669"/>
    <property type="project" value="UniProtKB-UniRule"/>
</dbReference>
<dbReference type="GO" id="GO:0003899">
    <property type="term" value="F:DNA-directed RNA polymerase activity"/>
    <property type="evidence" value="ECO:0007669"/>
    <property type="project" value="UniProtKB-UniRule"/>
</dbReference>
<dbReference type="GO" id="GO:0046983">
    <property type="term" value="F:protein dimerization activity"/>
    <property type="evidence" value="ECO:0007669"/>
    <property type="project" value="InterPro"/>
</dbReference>
<dbReference type="GO" id="GO:0006351">
    <property type="term" value="P:DNA-templated transcription"/>
    <property type="evidence" value="ECO:0007669"/>
    <property type="project" value="UniProtKB-UniRule"/>
</dbReference>
<dbReference type="CDD" id="cd06928">
    <property type="entry name" value="RNAP_alpha_NTD"/>
    <property type="match status" value="1"/>
</dbReference>
<dbReference type="FunFam" id="2.170.120.12:FF:000001">
    <property type="entry name" value="DNA-directed RNA polymerase subunit alpha"/>
    <property type="match status" value="1"/>
</dbReference>
<dbReference type="FunFam" id="3.30.1360.10:FF:000039">
    <property type="entry name" value="DNA-directed RNA polymerase subunit alpha"/>
    <property type="match status" value="1"/>
</dbReference>
<dbReference type="Gene3D" id="1.10.150.20">
    <property type="entry name" value="5' to 3' exonuclease, C-terminal subdomain"/>
    <property type="match status" value="1"/>
</dbReference>
<dbReference type="Gene3D" id="2.170.120.12">
    <property type="entry name" value="DNA-directed RNA polymerase, insert domain"/>
    <property type="match status" value="1"/>
</dbReference>
<dbReference type="Gene3D" id="3.30.1360.10">
    <property type="entry name" value="RNA polymerase, RBP11-like subunit"/>
    <property type="match status" value="1"/>
</dbReference>
<dbReference type="HAMAP" id="MF_00059">
    <property type="entry name" value="RNApol_bact_RpoA"/>
    <property type="match status" value="1"/>
</dbReference>
<dbReference type="InterPro" id="IPR011262">
    <property type="entry name" value="DNA-dir_RNA_pol_insert"/>
</dbReference>
<dbReference type="InterPro" id="IPR011263">
    <property type="entry name" value="DNA-dir_RNA_pol_RpoA/D/Rpb3"/>
</dbReference>
<dbReference type="InterPro" id="IPR011773">
    <property type="entry name" value="DNA-dir_RpoA"/>
</dbReference>
<dbReference type="InterPro" id="IPR036603">
    <property type="entry name" value="RBP11-like"/>
</dbReference>
<dbReference type="InterPro" id="IPR011260">
    <property type="entry name" value="RNAP_asu_C"/>
</dbReference>
<dbReference type="InterPro" id="IPR036643">
    <property type="entry name" value="RNApol_insert_sf"/>
</dbReference>
<dbReference type="NCBIfam" id="TIGR02027">
    <property type="entry name" value="rpoA"/>
    <property type="match status" value="1"/>
</dbReference>
<dbReference type="Pfam" id="PF01000">
    <property type="entry name" value="RNA_pol_A_bac"/>
    <property type="match status" value="1"/>
</dbReference>
<dbReference type="Pfam" id="PF03118">
    <property type="entry name" value="RNA_pol_A_CTD"/>
    <property type="match status" value="1"/>
</dbReference>
<dbReference type="Pfam" id="PF01193">
    <property type="entry name" value="RNA_pol_L"/>
    <property type="match status" value="1"/>
</dbReference>
<dbReference type="SMART" id="SM00662">
    <property type="entry name" value="RPOLD"/>
    <property type="match status" value="1"/>
</dbReference>
<dbReference type="SUPFAM" id="SSF47789">
    <property type="entry name" value="C-terminal domain of RNA polymerase alpha subunit"/>
    <property type="match status" value="1"/>
</dbReference>
<dbReference type="SUPFAM" id="SSF56553">
    <property type="entry name" value="Insert subdomain of RNA polymerase alpha subunit"/>
    <property type="match status" value="1"/>
</dbReference>
<dbReference type="SUPFAM" id="SSF55257">
    <property type="entry name" value="RBP11-like subunits of RNA polymerase"/>
    <property type="match status" value="1"/>
</dbReference>
<reference key="1">
    <citation type="submission" date="2007-03" db="EMBL/GenBank/DDBJ databases">
        <title>Sequence analysis of Arabidopsis pumila JS2 chloroplast DNA.</title>
        <authorList>
            <person name="Hosouchi T."/>
            <person name="Tsuruoka H."/>
            <person name="Kotani H."/>
        </authorList>
    </citation>
    <scope>NUCLEOTIDE SEQUENCE [LARGE SCALE GENOMIC DNA]</scope>
</reference>